<accession>P52480</accession>
<accession>Q3TBV8</accession>
<accession>Q3TBW5</accession>
<accession>Q3TC59</accession>
<accession>Q3U1X3</accession>
<accession>Q3U5P6</accession>
<accession>Q4VC20</accession>
<accession>Q64484</accession>
<accession>Q91YI8</accession>
<accession>Q9CWB1</accession>
<proteinExistence type="evidence at protein level"/>
<sequence length="531" mass="57845">MPKPHSEAGTAFIQTQQLHAAMADTFLEHMCRLDIDSAPITARNTGIICTIGPASRSVEMLKEMIKSGMNVARLNFSHGTHEYHAETIKNVREATESFASDPILYRPVAVALDTKGPEIRTGLIKGSGTAEVELKKGATLKITLDNAYMEKCDENILWLDYKNICKVVEVGSKIYVDDGLISLQVKEKGADFLVTEVENGGSLGSKKGVNLPGAAVDLPAVSEKDIQDLKFGVEQDVDMVFASFIRKAADVHEVRKVLGEKGKNIKIISKIENHEGVRRFDEILEASDGIMVARGDLGIEIPAEKVFLAQKMMIGRCNRAGKPVICATQMLESMIKKPRPTRAEGSDVANAVLDGADCIMLSGETAKGDYPLEAVRMQHLIAREAEAAIYHLQLFEELRRLAPITSDPTEAAAVGAVEASFKCCSGAIIVLTKSGRSAHQVARYRPRAPIIAVTRNPQTARQAHLYRGIFPVLCKDAVLNAWAEDVDLRVNLAMDVGKARGFFKKGDVVIVLTGWRPGSGFTNTMRVVPVP</sequence>
<reference key="1">
    <citation type="journal article" date="1995" name="Biochim. Biophys. Acta">
        <title>Molecular cloning of the complementary DNA for the mouse pyruvate kinase M-2 gene whose expression is dependent upon cell differentiation.</title>
        <authorList>
            <person name="Izumi S."/>
            <person name="Manabe A."/>
            <person name="Tomoyasu A."/>
            <person name="Kihara-Negishi F."/>
            <person name="Ariga H."/>
        </authorList>
    </citation>
    <scope>NUCLEOTIDE SEQUENCE [MRNA] (ISOFORM M2)</scope>
</reference>
<reference key="2">
    <citation type="journal article" date="1998" name="Biochim. Biophys. Acta">
        <title>Gene expression of mouse M1 and M2 pyruvate kinase isoenzymes correlates with differential poly(A) tract extension of their mRNAs during the development of spermatogenesis.</title>
        <authorList>
            <person name="de Luis O."/>
            <person name="del Mazo J."/>
        </authorList>
    </citation>
    <scope>NUCLEOTIDE SEQUENCE [MRNA] (ISOFORM M2)</scope>
    <source>
        <strain>SWR/J</strain>
    </source>
</reference>
<reference key="3">
    <citation type="journal article" date="2005" name="Science">
        <title>The transcriptional landscape of the mammalian genome.</title>
        <authorList>
            <person name="Carninci P."/>
            <person name="Kasukawa T."/>
            <person name="Katayama S."/>
            <person name="Gough J."/>
            <person name="Frith M.C."/>
            <person name="Maeda N."/>
            <person name="Oyama R."/>
            <person name="Ravasi T."/>
            <person name="Lenhard B."/>
            <person name="Wells C."/>
            <person name="Kodzius R."/>
            <person name="Shimokawa K."/>
            <person name="Bajic V.B."/>
            <person name="Brenner S.E."/>
            <person name="Batalov S."/>
            <person name="Forrest A.R."/>
            <person name="Zavolan M."/>
            <person name="Davis M.J."/>
            <person name="Wilming L.G."/>
            <person name="Aidinis V."/>
            <person name="Allen J.E."/>
            <person name="Ambesi-Impiombato A."/>
            <person name="Apweiler R."/>
            <person name="Aturaliya R.N."/>
            <person name="Bailey T.L."/>
            <person name="Bansal M."/>
            <person name="Baxter L."/>
            <person name="Beisel K.W."/>
            <person name="Bersano T."/>
            <person name="Bono H."/>
            <person name="Chalk A.M."/>
            <person name="Chiu K.P."/>
            <person name="Choudhary V."/>
            <person name="Christoffels A."/>
            <person name="Clutterbuck D.R."/>
            <person name="Crowe M.L."/>
            <person name="Dalla E."/>
            <person name="Dalrymple B.P."/>
            <person name="de Bono B."/>
            <person name="Della Gatta G."/>
            <person name="di Bernardo D."/>
            <person name="Down T."/>
            <person name="Engstrom P."/>
            <person name="Fagiolini M."/>
            <person name="Faulkner G."/>
            <person name="Fletcher C.F."/>
            <person name="Fukushima T."/>
            <person name="Furuno M."/>
            <person name="Futaki S."/>
            <person name="Gariboldi M."/>
            <person name="Georgii-Hemming P."/>
            <person name="Gingeras T.R."/>
            <person name="Gojobori T."/>
            <person name="Green R.E."/>
            <person name="Gustincich S."/>
            <person name="Harbers M."/>
            <person name="Hayashi Y."/>
            <person name="Hensch T.K."/>
            <person name="Hirokawa N."/>
            <person name="Hill D."/>
            <person name="Huminiecki L."/>
            <person name="Iacono M."/>
            <person name="Ikeo K."/>
            <person name="Iwama A."/>
            <person name="Ishikawa T."/>
            <person name="Jakt M."/>
            <person name="Kanapin A."/>
            <person name="Katoh M."/>
            <person name="Kawasawa Y."/>
            <person name="Kelso J."/>
            <person name="Kitamura H."/>
            <person name="Kitano H."/>
            <person name="Kollias G."/>
            <person name="Krishnan S.P."/>
            <person name="Kruger A."/>
            <person name="Kummerfeld S.K."/>
            <person name="Kurochkin I.V."/>
            <person name="Lareau L.F."/>
            <person name="Lazarevic D."/>
            <person name="Lipovich L."/>
            <person name="Liu J."/>
            <person name="Liuni S."/>
            <person name="McWilliam S."/>
            <person name="Madan Babu M."/>
            <person name="Madera M."/>
            <person name="Marchionni L."/>
            <person name="Matsuda H."/>
            <person name="Matsuzawa S."/>
            <person name="Miki H."/>
            <person name="Mignone F."/>
            <person name="Miyake S."/>
            <person name="Morris K."/>
            <person name="Mottagui-Tabar S."/>
            <person name="Mulder N."/>
            <person name="Nakano N."/>
            <person name="Nakauchi H."/>
            <person name="Ng P."/>
            <person name="Nilsson R."/>
            <person name="Nishiguchi S."/>
            <person name="Nishikawa S."/>
            <person name="Nori F."/>
            <person name="Ohara O."/>
            <person name="Okazaki Y."/>
            <person name="Orlando V."/>
            <person name="Pang K.C."/>
            <person name="Pavan W.J."/>
            <person name="Pavesi G."/>
            <person name="Pesole G."/>
            <person name="Petrovsky N."/>
            <person name="Piazza S."/>
            <person name="Reed J."/>
            <person name="Reid J.F."/>
            <person name="Ring B.Z."/>
            <person name="Ringwald M."/>
            <person name="Rost B."/>
            <person name="Ruan Y."/>
            <person name="Salzberg S.L."/>
            <person name="Sandelin A."/>
            <person name="Schneider C."/>
            <person name="Schoenbach C."/>
            <person name="Sekiguchi K."/>
            <person name="Semple C.A."/>
            <person name="Seno S."/>
            <person name="Sessa L."/>
            <person name="Sheng Y."/>
            <person name="Shibata Y."/>
            <person name="Shimada H."/>
            <person name="Shimada K."/>
            <person name="Silva D."/>
            <person name="Sinclair B."/>
            <person name="Sperling S."/>
            <person name="Stupka E."/>
            <person name="Sugiura K."/>
            <person name="Sultana R."/>
            <person name="Takenaka Y."/>
            <person name="Taki K."/>
            <person name="Tammoja K."/>
            <person name="Tan S.L."/>
            <person name="Tang S."/>
            <person name="Taylor M.S."/>
            <person name="Tegner J."/>
            <person name="Teichmann S.A."/>
            <person name="Ueda H.R."/>
            <person name="van Nimwegen E."/>
            <person name="Verardo R."/>
            <person name="Wei C.L."/>
            <person name="Yagi K."/>
            <person name="Yamanishi H."/>
            <person name="Zabarovsky E."/>
            <person name="Zhu S."/>
            <person name="Zimmer A."/>
            <person name="Hide W."/>
            <person name="Bult C."/>
            <person name="Grimmond S.M."/>
            <person name="Teasdale R.D."/>
            <person name="Liu E.T."/>
            <person name="Brusic V."/>
            <person name="Quackenbush J."/>
            <person name="Wahlestedt C."/>
            <person name="Mattick J.S."/>
            <person name="Hume D.A."/>
            <person name="Kai C."/>
            <person name="Sasaki D."/>
            <person name="Tomaru Y."/>
            <person name="Fukuda S."/>
            <person name="Kanamori-Katayama M."/>
            <person name="Suzuki M."/>
            <person name="Aoki J."/>
            <person name="Arakawa T."/>
            <person name="Iida J."/>
            <person name="Imamura K."/>
            <person name="Itoh M."/>
            <person name="Kato T."/>
            <person name="Kawaji H."/>
            <person name="Kawagashira N."/>
            <person name="Kawashima T."/>
            <person name="Kojima M."/>
            <person name="Kondo S."/>
            <person name="Konno H."/>
            <person name="Nakano K."/>
            <person name="Ninomiya N."/>
            <person name="Nishio T."/>
            <person name="Okada M."/>
            <person name="Plessy C."/>
            <person name="Shibata K."/>
            <person name="Shiraki T."/>
            <person name="Suzuki S."/>
            <person name="Tagami M."/>
            <person name="Waki K."/>
            <person name="Watahiki A."/>
            <person name="Okamura-Oho Y."/>
            <person name="Suzuki H."/>
            <person name="Kawai J."/>
            <person name="Hayashizaki Y."/>
        </authorList>
    </citation>
    <scope>NUCLEOTIDE SEQUENCE [LARGE SCALE MRNA] (ISOFORM M2)</scope>
    <scope>NUCLEOTIDE SEQUENCE [LARGE SCALE MRNA] OF 1-395 (ISOFORM M1)</scope>
    <source>
        <strain>C57BL/6J</strain>
        <strain>NOD</strain>
        <tissue>Bone marrow</tissue>
        <tissue>Kidney</tissue>
        <tissue>Muellerian duct</tissue>
    </source>
</reference>
<reference key="4">
    <citation type="journal article" date="2009" name="PLoS Biol.">
        <title>Lineage-specific biology revealed by a finished genome assembly of the mouse.</title>
        <authorList>
            <person name="Church D.M."/>
            <person name="Goodstadt L."/>
            <person name="Hillier L.W."/>
            <person name="Zody M.C."/>
            <person name="Goldstein S."/>
            <person name="She X."/>
            <person name="Bult C.J."/>
            <person name="Agarwala R."/>
            <person name="Cherry J.L."/>
            <person name="DiCuccio M."/>
            <person name="Hlavina W."/>
            <person name="Kapustin Y."/>
            <person name="Meric P."/>
            <person name="Maglott D."/>
            <person name="Birtle Z."/>
            <person name="Marques A.C."/>
            <person name="Graves T."/>
            <person name="Zhou S."/>
            <person name="Teague B."/>
            <person name="Potamousis K."/>
            <person name="Churas C."/>
            <person name="Place M."/>
            <person name="Herschleb J."/>
            <person name="Runnheim R."/>
            <person name="Forrest D."/>
            <person name="Amos-Landgraf J."/>
            <person name="Schwartz D.C."/>
            <person name="Cheng Z."/>
            <person name="Lindblad-Toh K."/>
            <person name="Eichler E.E."/>
            <person name="Ponting C.P."/>
        </authorList>
    </citation>
    <scope>NUCLEOTIDE SEQUENCE [LARGE SCALE GENOMIC DNA]</scope>
    <source>
        <strain>C57BL/6J</strain>
    </source>
</reference>
<reference key="5">
    <citation type="journal article" date="2004" name="Genome Res.">
        <title>The status, quality, and expansion of the NIH full-length cDNA project: the Mammalian Gene Collection (MGC).</title>
        <authorList>
            <consortium name="The MGC Project Team"/>
        </authorList>
    </citation>
    <scope>NUCLEOTIDE SEQUENCE [LARGE SCALE MRNA] (ISOFORM M2)</scope>
    <source>
        <strain>C57BL/6J</strain>
        <strain>FVB/N</strain>
        <tissue>Brain</tissue>
        <tissue>Mammary tumor</tissue>
    </source>
</reference>
<reference key="6">
    <citation type="submission" date="2009-01" db="UniProtKB">
        <authorList>
            <person name="Lubec G."/>
            <person name="Kang S.U."/>
            <person name="Klug S."/>
            <person name="Yang J.W."/>
            <person name="Zigmond M."/>
            <person name="Sunyer B."/>
            <person name="Chen W.-Q."/>
        </authorList>
    </citation>
    <scope>PROTEIN SEQUENCE OF 33-56; 67-89; 93-115; 126-136; 142-162; 167-224; 231-246; 248-255; 279-305; 320-336; 343-399; 401-433; 468-498 AND 506-526</scope>
    <scope>IDENTIFICATION BY MASS SPECTROMETRY</scope>
    <source>
        <strain>C57BL/6J</strain>
        <strain>OF1</strain>
        <tissue>Brain</tissue>
        <tissue>Hippocampus</tissue>
    </source>
</reference>
<reference key="7">
    <citation type="journal article" date="2005" name="Biochem. Biophys. Res. Commun.">
        <title>Proteomic identification of proteins conjugated to ISG15 in mouse and human cells.</title>
        <authorList>
            <person name="Giannakopoulos N.V."/>
            <person name="Luo J.K."/>
            <person name="Papov V."/>
            <person name="Zou W."/>
            <person name="Lenschow D.J."/>
            <person name="Jacobs B.S."/>
            <person name="Borden E.C."/>
            <person name="Li J."/>
            <person name="Virgin H.W."/>
            <person name="Zhang D.E."/>
        </authorList>
    </citation>
    <scope>ISGYLATION</scope>
</reference>
<reference key="8">
    <citation type="journal article" date="2008" name="Int. J. Biochem. Cell Biol.">
        <title>Pyruvate kinase isozyme type M2 (PKM2) interacts and cooperates with Oct-4 in regulating transcription.</title>
        <authorList>
            <person name="Lee J."/>
            <person name="Kim H.K."/>
            <person name="Han Y.-M."/>
            <person name="Kim J."/>
        </authorList>
    </citation>
    <scope>TISSUE SPECIFICITY</scope>
</reference>
<reference key="9">
    <citation type="journal article" date="2008" name="J. Proteome Res.">
        <title>Large-scale identification and evolution indexing of tyrosine phosphorylation sites from murine brain.</title>
        <authorList>
            <person name="Ballif B.A."/>
            <person name="Carey G.R."/>
            <person name="Sunyaev S.R."/>
            <person name="Gygi S.P."/>
        </authorList>
    </citation>
    <scope>PHOSPHORYLATION [LARGE SCALE ANALYSIS] AT TYR-105 AND TYR-148</scope>
    <scope>IDENTIFICATION BY MASS SPECTROMETRY [LARGE SCALE ANALYSIS]</scope>
    <source>
        <tissue>Brain</tissue>
    </source>
</reference>
<reference key="10">
    <citation type="journal article" date="2010" name="Cell">
        <title>A tissue-specific atlas of mouse protein phosphorylation and expression.</title>
        <authorList>
            <person name="Huttlin E.L."/>
            <person name="Jedrychowski M.P."/>
            <person name="Elias J.E."/>
            <person name="Goswami T."/>
            <person name="Rad R."/>
            <person name="Beausoleil S.A."/>
            <person name="Villen J."/>
            <person name="Haas W."/>
            <person name="Sowa M.E."/>
            <person name="Gygi S.P."/>
        </authorList>
    </citation>
    <scope>IDENTIFICATION BY MASS SPECTROMETRY [LARGE SCALE ANALYSIS]</scope>
    <source>
        <tissue>Brain</tissue>
        <tissue>Brown adipose tissue</tissue>
        <tissue>Heart</tissue>
        <tissue>Kidney</tissue>
        <tissue>Liver</tissue>
        <tissue>Lung</tissue>
        <tissue>Pancreas</tissue>
        <tissue>Spleen</tissue>
        <tissue>Testis</tissue>
    </source>
</reference>
<reference key="11">
    <citation type="journal article" date="2013" name="Mol. Cell">
        <title>SIRT5-mediated lysine desuccinylation impacts diverse metabolic pathways.</title>
        <authorList>
            <person name="Park J."/>
            <person name="Chen Y."/>
            <person name="Tishkoff D.X."/>
            <person name="Peng C."/>
            <person name="Tan M."/>
            <person name="Dai L."/>
            <person name="Xie Z."/>
            <person name="Zhang Y."/>
            <person name="Zwaans B.M."/>
            <person name="Skinner M.E."/>
            <person name="Lombard D.B."/>
            <person name="Zhao Y."/>
        </authorList>
    </citation>
    <scope>ACETYLATION [LARGE SCALE ANALYSIS] AT LYS-62; LYS-166; LYS-270; LYS-322 AND LYS-475</scope>
    <scope>SUCCINYLATION [LARGE SCALE ANALYSIS] AT LYS-66; LYS-166; LYS-322 AND LYS-498</scope>
    <scope>IDENTIFICATION BY MASS SPECTROMETRY [LARGE SCALE ANALYSIS]</scope>
    <source>
        <tissue>Embryonic fibroblast</tissue>
    </source>
</reference>
<reference key="12">
    <citation type="journal article" date="2017" name="Cell">
        <title>The mammalian ribo-interactome reveals ribosome functional diversity and heterogeneity.</title>
        <authorList>
            <person name="Simsek D."/>
            <person name="Tiu G.C."/>
            <person name="Flynn R.A."/>
            <person name="Byeon G.W."/>
            <person name="Leppek K."/>
            <person name="Xu A.F."/>
            <person name="Chang H.Y."/>
            <person name="Barna M."/>
        </authorList>
    </citation>
    <scope>FUNCTION</scope>
    <scope>MUTAGENESIS OF LYS-367 AND HIS-464</scope>
</reference>
<reference key="13">
    <citation type="journal article" date="2018" name="Cell Rep.">
        <title>The circadian clock controls immune checkpoint pathway in sepsis.</title>
        <authorList>
            <person name="Deng W."/>
            <person name="Zhu S."/>
            <person name="Zeng L."/>
            <person name="Liu J."/>
            <person name="Kang R."/>
            <person name="Yang M."/>
            <person name="Cao L."/>
            <person name="Wang H."/>
            <person name="Billiar T.R."/>
            <person name="Jiang J."/>
            <person name="Xie M."/>
            <person name="Tang D."/>
        </authorList>
    </citation>
    <scope>FUNCTION</scope>
    <scope>DISRUPTION PHENOTYPE</scope>
</reference>
<reference key="14">
    <citation type="journal article" date="2019" name="Nature">
        <title>Metabolic reprogramming by the S-nitroso-CoA reductase system protects against kidney injury.</title>
        <authorList>
            <person name="Zhou H.L."/>
            <person name="Zhang R."/>
            <person name="Anand P."/>
            <person name="Stomberski C.T."/>
            <person name="Qian Z."/>
            <person name="Hausladen A."/>
            <person name="Wang L."/>
            <person name="Rhee E.P."/>
            <person name="Parikh S.M."/>
            <person name="Karumanchi S.A."/>
            <person name="Stamler J.S."/>
        </authorList>
    </citation>
    <scope>S-NITROSYLATION AT CYS-423 AND CYS-424 (ISOFORM M2)</scope>
    <scope>MUTAGENESIS OF 423-CYS-CYS-424</scope>
</reference>
<dbReference type="EC" id="2.7.1.40" evidence="3"/>
<dbReference type="EC" id="2.7.11.1" evidence="3"/>
<dbReference type="EC" id="2.7.10.2" evidence="3"/>
<dbReference type="EMBL" id="D38379">
    <property type="protein sequence ID" value="BAA07457.1"/>
    <property type="molecule type" value="mRNA"/>
</dbReference>
<dbReference type="EMBL" id="X97047">
    <property type="protein sequence ID" value="CAA65761.1"/>
    <property type="molecule type" value="mRNA"/>
</dbReference>
<dbReference type="EMBL" id="AK002341">
    <property type="protein sequence ID" value="BAB22025.1"/>
    <property type="molecule type" value="mRNA"/>
</dbReference>
<dbReference type="EMBL" id="AK135397">
    <property type="protein sequence ID" value="BAE22519.1"/>
    <property type="molecule type" value="mRNA"/>
</dbReference>
<dbReference type="EMBL" id="AK151724">
    <property type="protein sequence ID" value="BAE30642.1"/>
    <property type="molecule type" value="mRNA"/>
</dbReference>
<dbReference type="EMBL" id="AK153483">
    <property type="protein sequence ID" value="BAE32031.1"/>
    <property type="molecule type" value="mRNA"/>
</dbReference>
<dbReference type="EMBL" id="AK155110">
    <property type="protein sequence ID" value="BAE33055.1"/>
    <property type="molecule type" value="mRNA"/>
</dbReference>
<dbReference type="EMBL" id="AK155655">
    <property type="protein sequence ID" value="BAE33370.1"/>
    <property type="molecule type" value="mRNA"/>
</dbReference>
<dbReference type="EMBL" id="AK170892">
    <property type="protein sequence ID" value="BAE42098.1"/>
    <property type="molecule type" value="mRNA"/>
</dbReference>
<dbReference type="EMBL" id="AK168943">
    <property type="protein sequence ID" value="BAE40751.1"/>
    <property type="molecule type" value="mRNA"/>
</dbReference>
<dbReference type="EMBL" id="AK171023">
    <property type="protein sequence ID" value="BAE42192.1"/>
    <property type="molecule type" value="mRNA"/>
</dbReference>
<dbReference type="EMBL" id="AK171033">
    <property type="protein sequence ID" value="BAE42199.1"/>
    <property type="molecule type" value="mRNA"/>
</dbReference>
<dbReference type="EMBL" id="AC160637">
    <property type="status" value="NOT_ANNOTATED_CDS"/>
    <property type="molecule type" value="Genomic_DNA"/>
</dbReference>
<dbReference type="EMBL" id="BC016619">
    <property type="protein sequence ID" value="AAH16619.1"/>
    <property type="molecule type" value="mRNA"/>
</dbReference>
<dbReference type="EMBL" id="BC094663">
    <property type="protein sequence ID" value="AAH94663.1"/>
    <property type="molecule type" value="mRNA"/>
</dbReference>
<dbReference type="CCDS" id="CCDS40659.1">
    <molecule id="P52480-1"/>
</dbReference>
<dbReference type="CCDS" id="CCDS57681.1">
    <molecule id="P52480-2"/>
</dbReference>
<dbReference type="PIR" id="S55921">
    <property type="entry name" value="S55921"/>
</dbReference>
<dbReference type="RefSeq" id="NP_001240812.1">
    <molecule id="P52480-2"/>
    <property type="nucleotide sequence ID" value="NM_001253883.2"/>
</dbReference>
<dbReference type="RefSeq" id="NP_001365795.1">
    <molecule id="P52480-2"/>
    <property type="nucleotide sequence ID" value="NM_001378866.1"/>
</dbReference>
<dbReference type="RefSeq" id="NP_001365796.1">
    <molecule id="P52480-2"/>
    <property type="nucleotide sequence ID" value="NM_001378867.1"/>
</dbReference>
<dbReference type="RefSeq" id="NP_001365797.1">
    <molecule id="P52480-1"/>
    <property type="nucleotide sequence ID" value="NM_001378868.1"/>
</dbReference>
<dbReference type="RefSeq" id="NP_001365798.1">
    <molecule id="P52480-1"/>
    <property type="nucleotide sequence ID" value="NM_001378869.1"/>
</dbReference>
<dbReference type="RefSeq" id="NP_001365799.1">
    <molecule id="P52480-1"/>
    <property type="nucleotide sequence ID" value="NM_001378870.1"/>
</dbReference>
<dbReference type="RefSeq" id="NP_001392420.1">
    <molecule id="P52480-2"/>
    <property type="nucleotide sequence ID" value="NM_001405491.1"/>
</dbReference>
<dbReference type="RefSeq" id="NP_035229.2">
    <molecule id="P52480-1"/>
    <property type="nucleotide sequence ID" value="NM_011099.3"/>
</dbReference>
<dbReference type="RefSeq" id="XP_006510918.1">
    <molecule id="P52480-1"/>
    <property type="nucleotide sequence ID" value="XM_006510855.1"/>
</dbReference>
<dbReference type="RefSeq" id="XP_011240975.1">
    <property type="nucleotide sequence ID" value="XM_011242673.1"/>
</dbReference>
<dbReference type="SMR" id="P52480"/>
<dbReference type="BioGRID" id="202191">
    <property type="interactions" value="72"/>
</dbReference>
<dbReference type="ComplexPortal" id="CPX-3059">
    <molecule id="P52480-1"/>
    <property type="entry name" value="PKM2 pyruvate kinase complex (tetramer)"/>
</dbReference>
<dbReference type="ComplexPortal" id="CPX-3060">
    <molecule id="P52480-1"/>
    <property type="entry name" value="PKM2 pyruvate kinase complex (dimer)"/>
</dbReference>
<dbReference type="ComplexPortal" id="CPX-3096">
    <molecule id="P52480-2"/>
    <property type="entry name" value="PKM1 pyruvate kinase complex"/>
</dbReference>
<dbReference type="DIP" id="DIP-40536N"/>
<dbReference type="FunCoup" id="P52480">
    <property type="interactions" value="1501"/>
</dbReference>
<dbReference type="IntAct" id="P52480">
    <property type="interactions" value="32"/>
</dbReference>
<dbReference type="MINT" id="P52480"/>
<dbReference type="STRING" id="10090.ENSMUSP00000034834"/>
<dbReference type="BindingDB" id="P52480"/>
<dbReference type="ChEMBL" id="CHEMBL5465259"/>
<dbReference type="GlyGen" id="P52480">
    <property type="glycosylation" value="2 sites, 1 O-linked glycan (2 sites)"/>
</dbReference>
<dbReference type="iPTMnet" id="P52480"/>
<dbReference type="MetOSite" id="P52480"/>
<dbReference type="PhosphoSitePlus" id="P52480"/>
<dbReference type="SwissPalm" id="P52480"/>
<dbReference type="REPRODUCTION-2DPAGE" id="IPI00407130"/>
<dbReference type="REPRODUCTION-2DPAGE" id="P52480"/>
<dbReference type="CPTAC" id="non-CPTAC-3588"/>
<dbReference type="CPTAC" id="non-CPTAC-3654"/>
<dbReference type="jPOST" id="P52480"/>
<dbReference type="PaxDb" id="10090-ENSMUSP00000034834"/>
<dbReference type="PeptideAtlas" id="P52480"/>
<dbReference type="ProteomicsDB" id="263452">
    <molecule id="P52480-1"/>
</dbReference>
<dbReference type="ProteomicsDB" id="263453">
    <molecule id="P52480-2"/>
</dbReference>
<dbReference type="Pumba" id="P52480"/>
<dbReference type="Antibodypedia" id="14162">
    <property type="antibodies" value="1224 antibodies from 45 providers"/>
</dbReference>
<dbReference type="DNASU" id="18746"/>
<dbReference type="Ensembl" id="ENSMUST00000034834.16">
    <molecule id="P52480-1"/>
    <property type="protein sequence ID" value="ENSMUSP00000034834.10"/>
    <property type="gene ID" value="ENSMUSG00000032294.18"/>
</dbReference>
<dbReference type="Ensembl" id="ENSMUST00000163694.4">
    <molecule id="P52480-2"/>
    <property type="protein sequence ID" value="ENSMUSP00000128770.3"/>
    <property type="gene ID" value="ENSMUSG00000032294.18"/>
</dbReference>
<dbReference type="GeneID" id="18746"/>
<dbReference type="KEGG" id="mmu:18746"/>
<dbReference type="UCSC" id="uc009pyf.2">
    <molecule id="P52480-1"/>
    <property type="organism name" value="mouse"/>
</dbReference>
<dbReference type="UCSC" id="uc009pyh.2">
    <molecule id="P52480-2"/>
    <property type="organism name" value="mouse"/>
</dbReference>
<dbReference type="AGR" id="MGI:97591"/>
<dbReference type="CTD" id="5315"/>
<dbReference type="MGI" id="MGI:97591">
    <property type="gene designation" value="Pkm"/>
</dbReference>
<dbReference type="VEuPathDB" id="HostDB:ENSMUSG00000032294"/>
<dbReference type="eggNOG" id="KOG2323">
    <property type="taxonomic scope" value="Eukaryota"/>
</dbReference>
<dbReference type="GeneTree" id="ENSGT00390000008859"/>
<dbReference type="HOGENOM" id="CLU_015439_0_1_1"/>
<dbReference type="InParanoid" id="P52480"/>
<dbReference type="OMA" id="RVHHIGE"/>
<dbReference type="OrthoDB" id="108365at2759"/>
<dbReference type="PhylomeDB" id="P52480"/>
<dbReference type="TreeFam" id="TF300390"/>
<dbReference type="BRENDA" id="2.7.1.40">
    <property type="organism ID" value="3474"/>
</dbReference>
<dbReference type="Reactome" id="R-MMU-6798695">
    <property type="pathway name" value="Neutrophil degranulation"/>
</dbReference>
<dbReference type="Reactome" id="R-MMU-70171">
    <property type="pathway name" value="Glycolysis"/>
</dbReference>
<dbReference type="Reactome" id="R-MMU-70268">
    <property type="pathway name" value="Pyruvate metabolism"/>
</dbReference>
<dbReference type="Reactome" id="R-MMU-9861718">
    <property type="pathway name" value="Regulation of pyruvate metabolism"/>
</dbReference>
<dbReference type="SABIO-RK" id="P52480"/>
<dbReference type="UniPathway" id="UPA00109">
    <property type="reaction ID" value="UER00188"/>
</dbReference>
<dbReference type="BioGRID-ORCS" id="18746">
    <property type="hits" value="27 hits in 80 CRISPR screens"/>
</dbReference>
<dbReference type="CD-CODE" id="CE726F99">
    <property type="entry name" value="Postsynaptic density"/>
</dbReference>
<dbReference type="ChiTaRS" id="Pkm">
    <property type="organism name" value="mouse"/>
</dbReference>
<dbReference type="PRO" id="PR:P52480"/>
<dbReference type="Proteomes" id="UP000000589">
    <property type="component" value="Chromosome 9"/>
</dbReference>
<dbReference type="RNAct" id="P52480">
    <property type="molecule type" value="protein"/>
</dbReference>
<dbReference type="Bgee" id="ENSMUSG00000032294">
    <property type="expression patterns" value="Expressed in retinal neural layer and 265 other cell types or tissues"/>
</dbReference>
<dbReference type="ExpressionAtlas" id="P52480">
    <property type="expression patterns" value="baseline and differential"/>
</dbReference>
<dbReference type="GO" id="GO:0005929">
    <property type="term" value="C:cilium"/>
    <property type="evidence" value="ECO:0000314"/>
    <property type="project" value="MGI"/>
</dbReference>
<dbReference type="GO" id="GO:0062023">
    <property type="term" value="C:collagen-containing extracellular matrix"/>
    <property type="evidence" value="ECO:0007005"/>
    <property type="project" value="UniProtKB"/>
</dbReference>
<dbReference type="GO" id="GO:0005829">
    <property type="term" value="C:cytosol"/>
    <property type="evidence" value="ECO:0000314"/>
    <property type="project" value="MGI"/>
</dbReference>
<dbReference type="GO" id="GO:0005739">
    <property type="term" value="C:mitochondrion"/>
    <property type="evidence" value="ECO:0007005"/>
    <property type="project" value="MGI"/>
</dbReference>
<dbReference type="GO" id="GO:0043209">
    <property type="term" value="C:myelin sheath"/>
    <property type="evidence" value="ECO:0007005"/>
    <property type="project" value="UniProtKB"/>
</dbReference>
<dbReference type="GO" id="GO:0005634">
    <property type="term" value="C:nucleus"/>
    <property type="evidence" value="ECO:0000250"/>
    <property type="project" value="UniProtKB"/>
</dbReference>
<dbReference type="GO" id="GO:0001917">
    <property type="term" value="C:photoreceptor inner segment"/>
    <property type="evidence" value="ECO:0000314"/>
    <property type="project" value="MGI"/>
</dbReference>
<dbReference type="GO" id="GO:0005791">
    <property type="term" value="C:rough endoplasmic reticulum"/>
    <property type="evidence" value="ECO:0000314"/>
    <property type="project" value="UniProtKB"/>
</dbReference>
<dbReference type="GO" id="GO:0005524">
    <property type="term" value="F:ATP binding"/>
    <property type="evidence" value="ECO:0007669"/>
    <property type="project" value="UniProtKB-KW"/>
</dbReference>
<dbReference type="GO" id="GO:0035402">
    <property type="term" value="F:histone H3T11 kinase activity"/>
    <property type="evidence" value="ECO:0000250"/>
    <property type="project" value="UniProtKB"/>
</dbReference>
<dbReference type="GO" id="GO:0000287">
    <property type="term" value="F:magnesium ion binding"/>
    <property type="evidence" value="ECO:0007669"/>
    <property type="project" value="InterPro"/>
</dbReference>
<dbReference type="GO" id="GO:0003729">
    <property type="term" value="F:mRNA binding"/>
    <property type="evidence" value="ECO:0000314"/>
    <property type="project" value="UniProtKB"/>
</dbReference>
<dbReference type="GO" id="GO:0030955">
    <property type="term" value="F:potassium ion binding"/>
    <property type="evidence" value="ECO:0007669"/>
    <property type="project" value="InterPro"/>
</dbReference>
<dbReference type="GO" id="GO:0042803">
    <property type="term" value="F:protein homodimerization activity"/>
    <property type="evidence" value="ECO:0000250"/>
    <property type="project" value="UniProtKB"/>
</dbReference>
<dbReference type="GO" id="GO:0004713">
    <property type="term" value="F:protein tyrosine kinase activity"/>
    <property type="evidence" value="ECO:0000250"/>
    <property type="project" value="UniProtKB"/>
</dbReference>
<dbReference type="GO" id="GO:0004743">
    <property type="term" value="F:pyruvate kinase activity"/>
    <property type="evidence" value="ECO:0000314"/>
    <property type="project" value="MGI"/>
</dbReference>
<dbReference type="GO" id="GO:0003713">
    <property type="term" value="F:transcription coactivator activity"/>
    <property type="evidence" value="ECO:0000250"/>
    <property type="project" value="UniProtKB"/>
</dbReference>
<dbReference type="GO" id="GO:0061621">
    <property type="term" value="P:canonical glycolysis"/>
    <property type="evidence" value="ECO:0000314"/>
    <property type="project" value="MGI"/>
</dbReference>
<dbReference type="GO" id="GO:0006096">
    <property type="term" value="P:glycolytic process"/>
    <property type="evidence" value="ECO:0000314"/>
    <property type="project" value="MGI"/>
</dbReference>
<dbReference type="GO" id="GO:2000767">
    <property type="term" value="P:positive regulation of cytoplasmic translation"/>
    <property type="evidence" value="ECO:0000314"/>
    <property type="project" value="UniProtKB"/>
</dbReference>
<dbReference type="GO" id="GO:1903672">
    <property type="term" value="P:positive regulation of sprouting angiogenesis"/>
    <property type="evidence" value="ECO:0000250"/>
    <property type="project" value="UniProtKB"/>
</dbReference>
<dbReference type="GO" id="GO:0045944">
    <property type="term" value="P:positive regulation of transcription by RNA polymerase II"/>
    <property type="evidence" value="ECO:0000250"/>
    <property type="project" value="UniProtKB"/>
</dbReference>
<dbReference type="GO" id="GO:0012501">
    <property type="term" value="P:programmed cell death"/>
    <property type="evidence" value="ECO:0007669"/>
    <property type="project" value="Ensembl"/>
</dbReference>
<dbReference type="CDD" id="cd00288">
    <property type="entry name" value="Pyruvate_Kinase"/>
    <property type="match status" value="1"/>
</dbReference>
<dbReference type="FunFam" id="3.20.20.60:FF:000025">
    <property type="entry name" value="Pyruvate kinase"/>
    <property type="match status" value="1"/>
</dbReference>
<dbReference type="FunFam" id="3.40.1380.20:FF:000001">
    <property type="entry name" value="Pyruvate kinase"/>
    <property type="match status" value="1"/>
</dbReference>
<dbReference type="FunFam" id="3.40.1380.20:FF:000002">
    <property type="entry name" value="Pyruvate kinase"/>
    <property type="match status" value="1"/>
</dbReference>
<dbReference type="FunFam" id="2.40.33.10:FF:000023">
    <property type="entry name" value="Pyruvate kinase PKM"/>
    <property type="match status" value="1"/>
</dbReference>
<dbReference type="Gene3D" id="3.20.20.60">
    <property type="entry name" value="Phosphoenolpyruvate-binding domains"/>
    <property type="match status" value="1"/>
</dbReference>
<dbReference type="Gene3D" id="2.40.33.10">
    <property type="entry name" value="PK beta-barrel domain-like"/>
    <property type="match status" value="1"/>
</dbReference>
<dbReference type="Gene3D" id="3.40.1380.20">
    <property type="entry name" value="Pyruvate kinase, C-terminal domain"/>
    <property type="match status" value="2"/>
</dbReference>
<dbReference type="InterPro" id="IPR001697">
    <property type="entry name" value="Pyr_Knase"/>
</dbReference>
<dbReference type="InterPro" id="IPR015813">
    <property type="entry name" value="Pyrv/PenolPyrv_kinase-like_dom"/>
</dbReference>
<dbReference type="InterPro" id="IPR040442">
    <property type="entry name" value="Pyrv_kinase-like_dom_sf"/>
</dbReference>
<dbReference type="InterPro" id="IPR011037">
    <property type="entry name" value="Pyrv_Knase-like_insert_dom_sf"/>
</dbReference>
<dbReference type="InterPro" id="IPR018209">
    <property type="entry name" value="Pyrv_Knase_AS"/>
</dbReference>
<dbReference type="InterPro" id="IPR015793">
    <property type="entry name" value="Pyrv_Knase_brl"/>
</dbReference>
<dbReference type="InterPro" id="IPR015795">
    <property type="entry name" value="Pyrv_Knase_C"/>
</dbReference>
<dbReference type="InterPro" id="IPR036918">
    <property type="entry name" value="Pyrv_Knase_C_sf"/>
</dbReference>
<dbReference type="InterPro" id="IPR015806">
    <property type="entry name" value="Pyrv_Knase_insert_dom_sf"/>
</dbReference>
<dbReference type="NCBIfam" id="NF004491">
    <property type="entry name" value="PRK05826.1"/>
    <property type="match status" value="1"/>
</dbReference>
<dbReference type="NCBIfam" id="NF004978">
    <property type="entry name" value="PRK06354.1"/>
    <property type="match status" value="1"/>
</dbReference>
<dbReference type="NCBIfam" id="TIGR01064">
    <property type="entry name" value="pyruv_kin"/>
    <property type="match status" value="1"/>
</dbReference>
<dbReference type="PANTHER" id="PTHR11817">
    <property type="entry name" value="PYRUVATE KINASE"/>
    <property type="match status" value="1"/>
</dbReference>
<dbReference type="Pfam" id="PF00224">
    <property type="entry name" value="PK"/>
    <property type="match status" value="1"/>
</dbReference>
<dbReference type="Pfam" id="PF02887">
    <property type="entry name" value="PK_C"/>
    <property type="match status" value="1"/>
</dbReference>
<dbReference type="PRINTS" id="PR01050">
    <property type="entry name" value="PYRUVTKNASE"/>
</dbReference>
<dbReference type="SUPFAM" id="SSF51621">
    <property type="entry name" value="Phosphoenolpyruvate/pyruvate domain"/>
    <property type="match status" value="1"/>
</dbReference>
<dbReference type="SUPFAM" id="SSF50800">
    <property type="entry name" value="PK beta-barrel domain-like"/>
    <property type="match status" value="1"/>
</dbReference>
<dbReference type="SUPFAM" id="SSF52935">
    <property type="entry name" value="PK C-terminal domain-like"/>
    <property type="match status" value="1"/>
</dbReference>
<dbReference type="PROSITE" id="PS00110">
    <property type="entry name" value="PYRUVATE_KINASE"/>
    <property type="match status" value="1"/>
</dbReference>
<evidence type="ECO:0000250" key="1">
    <source>
        <dbReference type="UniProtKB" id="P00549"/>
    </source>
</evidence>
<evidence type="ECO:0000250" key="2">
    <source>
        <dbReference type="UniProtKB" id="P11980"/>
    </source>
</evidence>
<evidence type="ECO:0000250" key="3">
    <source>
        <dbReference type="UniProtKB" id="P14618"/>
    </source>
</evidence>
<evidence type="ECO:0000250" key="4">
    <source>
        <dbReference type="UniProtKB" id="P30613"/>
    </source>
</evidence>
<evidence type="ECO:0000269" key="5">
    <source>
    </source>
</evidence>
<evidence type="ECO:0000269" key="6">
    <source>
    </source>
</evidence>
<evidence type="ECO:0000269" key="7">
    <source>
    </source>
</evidence>
<evidence type="ECO:0000269" key="8">
    <source>
    </source>
</evidence>
<evidence type="ECO:0000269" key="9">
    <source>
    </source>
</evidence>
<evidence type="ECO:0000303" key="10">
    <source>
    </source>
</evidence>
<evidence type="ECO:0000303" key="11">
    <source>
    </source>
</evidence>
<evidence type="ECO:0000305" key="12"/>
<evidence type="ECO:0007744" key="13">
    <source>
    </source>
</evidence>
<evidence type="ECO:0007744" key="14">
    <source>
    </source>
</evidence>
<protein>
    <recommendedName>
        <fullName>Pyruvate kinase PKM</fullName>
        <ecNumber evidence="3">2.7.1.40</ecNumber>
    </recommendedName>
    <alternativeName>
        <fullName>Pyruvate kinase muscle isozyme</fullName>
    </alternativeName>
    <alternativeName>
        <fullName evidence="12">Threonine-protein kinase PKM2</fullName>
        <ecNumber evidence="3">2.7.11.1</ecNumber>
    </alternativeName>
    <alternativeName>
        <fullName evidence="12">Tyrosine-protein kinase PKM2</fullName>
        <ecNumber evidence="3">2.7.10.2</ecNumber>
    </alternativeName>
</protein>
<comment type="function">
    <text evidence="3">Catalyzes the final rate-limiting step of glycolysis by mediating the transfer of a phosphoryl group from phosphoenolpyruvate (PEP) to ADP, generating ATP. The ratio between the highly active tetrameric form and nearly inactive dimeric form determines whether glucose carbons are channeled to biosynthetic processes or used for glycolytic ATP production. The transition between the 2 forms contributes to the control of glycolysis and is important for tumor cell proliferation and survival.</text>
</comment>
<comment type="function">
    <molecule>Isoform M2</molecule>
    <text evidence="3 7 8">Isoform specifically expressed during embryogenesis that has low pyruvate kinase activity by itself and requires allosteric activation by D-fructose 1,6-bisphosphate (FBP) for pyruvate kinase activity (By similarity). In addition to its pyruvate kinase activity in the cytoplasm, also acts as a regulator of transcription in the nucleus by acting as a protein kinase (By similarity). Translocates into the nucleus in response to various signals, such as EGF receptor activation, and homodimerizes, leading to its conversion into a protein threonine- and tyrosine-protein kinase (By similarity). Catalyzes phosphorylation of STAT3 at 'Tyr-705' and histone H3 at 'Thr-11' (H3T11ph), leading to activate transcription (By similarity). Its ability to activate transcription plays a role in cancer cells by promoting cell proliferation and promote tumorigenesis (By similarity). Promotes the expression of the immune checkpoint protein CD274 in BMAL1-deficient macrophages (PubMed:29996098). May also act as a translation regulator for a subset of mRNAs, independently of its pyruvate kinase activity: associates with subpools of endoplasmic reticulum-associated ribosomes, binds directly to the mRNAs translated at the endoplasmic reticulum and promotes translation of these endoplasmic reticulum-destined mRNAs (PubMed:28575669). Plays a role in caspase independent cell death of tumor cells (By similarity).</text>
</comment>
<comment type="function">
    <molecule>Isoform M1</molecule>
    <text evidence="3">Pyruvate kinase isoform expressed in adult tissues, which replaces isoform M2 after birth. In contrast to isoform M2, has high pyruvate kinase activity by itself and does not require allosteric activation by D-fructose 1,6-bisphosphate (FBP) for activity.</text>
</comment>
<comment type="catalytic activity">
    <molecule>Isoform M2</molecule>
    <reaction evidence="3">
        <text>pyruvate + ATP = phosphoenolpyruvate + ADP + H(+)</text>
        <dbReference type="Rhea" id="RHEA:18157"/>
        <dbReference type="ChEBI" id="CHEBI:15361"/>
        <dbReference type="ChEBI" id="CHEBI:15378"/>
        <dbReference type="ChEBI" id="CHEBI:30616"/>
        <dbReference type="ChEBI" id="CHEBI:58702"/>
        <dbReference type="ChEBI" id="CHEBI:456216"/>
        <dbReference type="EC" id="2.7.1.40"/>
    </reaction>
    <physiologicalReaction direction="right-to-left" evidence="3">
        <dbReference type="Rhea" id="RHEA:18159"/>
    </physiologicalReaction>
</comment>
<comment type="catalytic activity">
    <molecule>Isoform M1</molecule>
    <reaction evidence="3">
        <text>pyruvate + ATP = phosphoenolpyruvate + ADP + H(+)</text>
        <dbReference type="Rhea" id="RHEA:18157"/>
        <dbReference type="ChEBI" id="CHEBI:15361"/>
        <dbReference type="ChEBI" id="CHEBI:15378"/>
        <dbReference type="ChEBI" id="CHEBI:30616"/>
        <dbReference type="ChEBI" id="CHEBI:58702"/>
        <dbReference type="ChEBI" id="CHEBI:456216"/>
        <dbReference type="EC" id="2.7.1.40"/>
    </reaction>
</comment>
<comment type="catalytic activity">
    <molecule>Isoform M2</molecule>
    <reaction evidence="3">
        <text>L-tyrosyl-[protein] + ATP = O-phospho-L-tyrosyl-[protein] + ADP + H(+)</text>
        <dbReference type="Rhea" id="RHEA:10596"/>
        <dbReference type="Rhea" id="RHEA-COMP:10136"/>
        <dbReference type="Rhea" id="RHEA-COMP:20101"/>
        <dbReference type="ChEBI" id="CHEBI:15378"/>
        <dbReference type="ChEBI" id="CHEBI:30616"/>
        <dbReference type="ChEBI" id="CHEBI:46858"/>
        <dbReference type="ChEBI" id="CHEBI:61978"/>
        <dbReference type="ChEBI" id="CHEBI:456216"/>
        <dbReference type="EC" id="2.7.10.2"/>
    </reaction>
    <physiologicalReaction direction="left-to-right" evidence="3">
        <dbReference type="Rhea" id="RHEA:10597"/>
    </physiologicalReaction>
</comment>
<comment type="catalytic activity">
    <molecule>Isoform M2</molecule>
    <reaction evidence="3">
        <text>L-threonyl-[protein] + ATP = O-phospho-L-threonyl-[protein] + ADP + H(+)</text>
        <dbReference type="Rhea" id="RHEA:46608"/>
        <dbReference type="Rhea" id="RHEA-COMP:11060"/>
        <dbReference type="Rhea" id="RHEA-COMP:11605"/>
        <dbReference type="ChEBI" id="CHEBI:15378"/>
        <dbReference type="ChEBI" id="CHEBI:30013"/>
        <dbReference type="ChEBI" id="CHEBI:30616"/>
        <dbReference type="ChEBI" id="CHEBI:61977"/>
        <dbReference type="ChEBI" id="CHEBI:456216"/>
        <dbReference type="EC" id="2.7.11.1"/>
    </reaction>
    <physiologicalReaction direction="left-to-right" evidence="3">
        <dbReference type="Rhea" id="RHEA:46609"/>
    </physiologicalReaction>
</comment>
<comment type="cofactor">
    <cofactor evidence="3">
        <name>Mg(2+)</name>
        <dbReference type="ChEBI" id="CHEBI:18420"/>
    </cofactor>
</comment>
<comment type="cofactor">
    <cofactor evidence="3">
        <name>K(+)</name>
        <dbReference type="ChEBI" id="CHEBI:29103"/>
    </cofactor>
</comment>
<comment type="activity regulation">
    <molecule>Isoform M2</molecule>
    <text evidence="3">Isoform M2 is allosterically activated by D-fructose 1,6-bisphosphate (FBP). Inhibited by oxalate and 3,3',5-triiodo-L-thyronine (T3). The activity of the tetrameric form is inhibited by PML. Selective binding to tyrosine-phosphorylated peptides releases the allosteric activator FBP, leading to inhibition of PKM enzymatic activity, this diverts glucose metabolites from energy production to anabolic processes when cells are stimulated by certain growth factors. Glycolytic flux are highly dependent on de novo biosynthesis of serine and glycine, and serine is a natural ligand and allosteric activator of isoform M2. Acetylation at Lys-433 promotes its translocation into the nucleus and homodimerization, promoting the protein kinase activity.</text>
</comment>
<comment type="activity regulation">
    <molecule>Isoform M1</molecule>
    <text evidence="3">Has high pyruvate kinase activity by itself and does not require allosteric activation by D-fructose 1,6-bisphosphate (FBP) for activity.</text>
</comment>
<comment type="pathway">
    <text evidence="3">Carbohydrate degradation; glycolysis; pyruvate from D-glyceraldehyde 3-phosphate: step 5/5.</text>
</comment>
<comment type="subunit">
    <molecule>Isoform M2</molecule>
    <text evidence="3">Monomer and homotetramer; exists as a monomer in the absence of D-fructose 1,6-bisphosphate (FBP), and reversibly associates to form a homotetramer in the presence of FBP. The monomeric form binds 3,3',5-triiodo-L-thyronine (T3). Tetramer formation induces pyruvate kinase activity. The tetrameric form has high affinity for the substrate and is associated within the glycolytic enzyme complex. FBP stimulates the formation of tetramers from dimers. Homodimer; exists in a dimeric form in tumor cells and the dimeric form has less affinity for the phosphoenolpyruvate substrate. The homodimer converts into a protein kinase. Interacts with HERC1, POU5F1 and PML. Interacts with EGLN3; the interaction hydroxylates PKM under hypoxia and enhances binding to HIF1A. Interacts with HIF1A; the interaction is enhanced by binding of EGLN3, promoting enhanced transcription activity under hypoxia. Interacts with TRIM35; this interaction prevents FGFR1-dependent tyrosine phosphorylation. Interacts with JMJD8. Interacts with TRAF4. Interacts with (phosphorylated) CTNNB1; leading to activate transcription. Interacts with TSC22D2; the interaction results in reduced nuclear levels of PKM isoform M2, leading to repression of cyclin CCND1 transcription and reduced cell growth (By similarity).</text>
</comment>
<comment type="interaction">
    <interactant intactId="EBI-647785">
        <id>P52480</id>
    </interactant>
    <interactant intactId="EBI-1606219">
        <id>P20263</id>
        <label>Pou5f1</label>
    </interactant>
    <organismsDiffer>false</organismsDiffer>
    <experiments>6</experiments>
</comment>
<comment type="interaction">
    <interactant intactId="EBI-647785">
        <id>P52480</id>
    </interactant>
    <interactant intactId="EBI-8830282">
        <id>PRO_0000025675</id>
        <label>PRNP</label>
        <dbReference type="UniProtKB" id="P04156"/>
    </interactant>
    <organismsDiffer>true</organismsDiffer>
    <experiments>5</experiments>
</comment>
<comment type="interaction">
    <interactant intactId="EBI-647785">
        <id>P52480</id>
    </interactant>
    <interactant intactId="EBI-6857429">
        <id>P26663</id>
    </interactant>
    <organismsDiffer>true</organismsDiffer>
    <experiments>3</experiments>
</comment>
<comment type="subcellular location">
    <molecule>Isoform M2</molecule>
    <subcellularLocation>
        <location evidence="3">Cytoplasm</location>
    </subcellularLocation>
    <subcellularLocation>
        <location evidence="3">Nucleus</location>
    </subcellularLocation>
    <text evidence="3">Translocates to the nucleus in response to various signals, such as EGF receptor activation or apoptotic stimuli. Nuclear translocation is promoted by acetylation by EP300. Deacetylation by SIRT6 promotes its nuclear export in a process dependent of XPO4, thereby suppressing its ability to activate transcription and promote tumorigenesis.</text>
</comment>
<comment type="subcellular location">
    <molecule>Isoform M1</molecule>
    <subcellularLocation>
        <location evidence="3">Cytoplasm</location>
    </subcellularLocation>
</comment>
<comment type="alternative products">
    <event type="alternative splicing"/>
    <isoform>
        <id>P52480-1</id>
        <name evidence="11">M2</name>
        <name evidence="11">PKM2</name>
        <sequence type="displayed"/>
    </isoform>
    <isoform>
        <id>P52480-2</id>
        <name evidence="11">M1</name>
        <name evidence="11">PKM1</name>
        <sequence type="described" ref="VSP_025057"/>
    </isoform>
</comment>
<comment type="tissue specificity">
    <text evidence="6">Embryonic stem cells and embryonal carcinoma cells.</text>
</comment>
<comment type="PTM">
    <text evidence="5">ISGylated.</text>
</comment>
<comment type="PTM">
    <text evidence="3">Under hypoxia, hydroxylated by EGLN3.</text>
</comment>
<comment type="PTM">
    <text evidence="3">Acetylation at Lys-305 is stimulated by high glucose concentration, it decreases enzyme activity and promotes its lysosomal-dependent degradation via chaperone-mediated autophagy.</text>
</comment>
<comment type="PTM">
    <molecule>Isoform M2</molecule>
    <text evidence="3">Acetylated at Lys-433 by EP300, leading to impair phosphoenolpyruvate substrate-binding and promote its homodimerization and subsequent translocation to the nucleus. Deacetylation at Lys-433 by SIRT6 promotes its nuclear export into the cytoplasm, leading to suppress its nuclear localization and oncogenic function.</text>
</comment>
<comment type="PTM">
    <molecule>Isoform M2</molecule>
    <text evidence="9">S-nitrosylation at Cys-423 and Cys-424 inhibits homotetramerization and pyruvate kinase activity (PubMed:30487609). S-nitrosylation is indirectly inhibited by AKR1A1 which degrades S-nitroso-CoA, a cofactor required to S-nitrosylate proteins (PubMed:30487609).</text>
</comment>
<comment type="PTM">
    <text evidence="3">FGFR1-dependent tyrosine phosphorylation is reduced by interaction with TRIM35.</text>
</comment>
<comment type="disruption phenotype">
    <text evidence="8">Myeloid-cell-specific BMAL1 and PKM2 double knockout reduces the risk of sepsis lethality which is associated with reduced serum lactate levels and reduced CD274 expression in macrophages.</text>
</comment>
<comment type="miscellaneous">
    <text evidence="3">There are 4 isozymes of pyruvate kinase in mammals (L, R, M1, M2) encoded by 2 different genes: PKLR and PKM. The L and R isozymes are generated from the PKLR by differential splicing of RNA; the M1 and M2 forms are produced from the PKM gene by differential splicing. L type is major isozyme in the liver, R is found in red cells, M1 is the main form in muscle, heart and brain, and M2 is found in early fetal tissues as well as in most cancer cells.</text>
</comment>
<comment type="similarity">
    <text evidence="12">Belongs to the pyruvate kinase family.</text>
</comment>
<name>KPYM_MOUSE</name>
<gene>
    <name type="primary">Pkm</name>
    <name type="synonym">Pk3</name>
    <name type="synonym">Pkm2</name>
    <name type="synonym">Pykm</name>
</gene>
<keyword id="KW-0007">Acetylation</keyword>
<keyword id="KW-0021">Allosteric enzyme</keyword>
<keyword id="KW-0025">Alternative splicing</keyword>
<keyword id="KW-0067">ATP-binding</keyword>
<keyword id="KW-0963">Cytoplasm</keyword>
<keyword id="KW-0903">Direct protein sequencing</keyword>
<keyword id="KW-0324">Glycolysis</keyword>
<keyword id="KW-0379">Hydroxylation</keyword>
<keyword id="KW-1017">Isopeptide bond</keyword>
<keyword id="KW-0418">Kinase</keyword>
<keyword id="KW-0460">Magnesium</keyword>
<keyword id="KW-0479">Metal-binding</keyword>
<keyword id="KW-0488">Methylation</keyword>
<keyword id="KW-0547">Nucleotide-binding</keyword>
<keyword id="KW-0539">Nucleus</keyword>
<keyword id="KW-0597">Phosphoprotein</keyword>
<keyword id="KW-0630">Potassium</keyword>
<keyword id="KW-0670">Pyruvate</keyword>
<keyword id="KW-1185">Reference proteome</keyword>
<keyword id="KW-0702">S-nitrosylation</keyword>
<keyword id="KW-0808">Transferase</keyword>
<keyword id="KW-0810">Translation regulation</keyword>
<keyword id="KW-0832">Ubl conjugation</keyword>
<organism>
    <name type="scientific">Mus musculus</name>
    <name type="common">Mouse</name>
    <dbReference type="NCBI Taxonomy" id="10090"/>
    <lineage>
        <taxon>Eukaryota</taxon>
        <taxon>Metazoa</taxon>
        <taxon>Chordata</taxon>
        <taxon>Craniata</taxon>
        <taxon>Vertebrata</taxon>
        <taxon>Euteleostomi</taxon>
        <taxon>Mammalia</taxon>
        <taxon>Eutheria</taxon>
        <taxon>Euarchontoglires</taxon>
        <taxon>Glires</taxon>
        <taxon>Rodentia</taxon>
        <taxon>Myomorpha</taxon>
        <taxon>Muroidea</taxon>
        <taxon>Muridae</taxon>
        <taxon>Murinae</taxon>
        <taxon>Mus</taxon>
        <taxon>Mus</taxon>
    </lineage>
</organism>
<feature type="chain" id="PRO_0000112089" description="Pyruvate kinase PKM">
    <location>
        <begin position="1"/>
        <end position="531"/>
    </location>
</feature>
<feature type="region of interest" description="Interaction with POU5F1" evidence="3">
    <location>
        <begin position="307"/>
        <end position="531"/>
    </location>
</feature>
<feature type="region of interest" description="Intersubunit contact">
    <location>
        <begin position="389"/>
        <end position="433"/>
    </location>
</feature>
<feature type="binding site" evidence="3">
    <location>
        <position position="70"/>
    </location>
    <ligand>
        <name>L-serine</name>
        <dbReference type="ChEBI" id="CHEBI:33384"/>
    </ligand>
</feature>
<feature type="binding site" evidence="4">
    <location>
        <position position="73"/>
    </location>
    <ligand>
        <name>substrate</name>
    </ligand>
</feature>
<feature type="binding site" evidence="3">
    <location>
        <begin position="75"/>
        <end position="78"/>
    </location>
    <ligand>
        <name>ATP</name>
        <dbReference type="ChEBI" id="CHEBI:30616"/>
    </ligand>
</feature>
<feature type="binding site" evidence="3">
    <location>
        <position position="75"/>
    </location>
    <ligand>
        <name>K(+)</name>
        <dbReference type="ChEBI" id="CHEBI:29103"/>
    </ligand>
</feature>
<feature type="binding site" evidence="3">
    <location>
        <position position="77"/>
    </location>
    <ligand>
        <name>K(+)</name>
        <dbReference type="ChEBI" id="CHEBI:29103"/>
    </ligand>
</feature>
<feature type="binding site" evidence="3">
    <location>
        <position position="106"/>
    </location>
    <ligand>
        <name>L-serine</name>
        <dbReference type="ChEBI" id="CHEBI:33384"/>
    </ligand>
</feature>
<feature type="binding site" evidence="3">
    <location>
        <position position="113"/>
    </location>
    <ligand>
        <name>K(+)</name>
        <dbReference type="ChEBI" id="CHEBI:29103"/>
    </ligand>
</feature>
<feature type="binding site" evidence="3">
    <location>
        <position position="114"/>
    </location>
    <ligand>
        <name>K(+)</name>
        <dbReference type="ChEBI" id="CHEBI:29103"/>
    </ligand>
</feature>
<feature type="binding site" evidence="3">
    <location>
        <position position="120"/>
    </location>
    <ligand>
        <name>ATP</name>
        <dbReference type="ChEBI" id="CHEBI:30616"/>
    </ligand>
</feature>
<feature type="binding site" evidence="3">
    <location>
        <position position="207"/>
    </location>
    <ligand>
        <name>ATP</name>
        <dbReference type="ChEBI" id="CHEBI:30616"/>
    </ligand>
</feature>
<feature type="binding site" evidence="4">
    <location>
        <position position="270"/>
    </location>
    <ligand>
        <name>substrate</name>
    </ligand>
</feature>
<feature type="binding site" evidence="3">
    <location>
        <position position="272"/>
    </location>
    <ligand>
        <name>Mg(2+)</name>
        <dbReference type="ChEBI" id="CHEBI:18420"/>
    </ligand>
</feature>
<feature type="binding site" evidence="4">
    <location>
        <position position="295"/>
    </location>
    <ligand>
        <name>substrate</name>
    </ligand>
</feature>
<feature type="binding site" evidence="3">
    <location>
        <position position="296"/>
    </location>
    <ligand>
        <name>Mg(2+)</name>
        <dbReference type="ChEBI" id="CHEBI:18420"/>
    </ligand>
</feature>
<feature type="binding site" evidence="4">
    <location>
        <position position="296"/>
    </location>
    <ligand>
        <name>substrate</name>
    </ligand>
</feature>
<feature type="binding site" evidence="4">
    <location>
        <position position="328"/>
    </location>
    <ligand>
        <name>substrate</name>
    </ligand>
</feature>
<feature type="binding site" evidence="3">
    <location>
        <begin position="432"/>
        <end position="437"/>
    </location>
    <ligand>
        <name>beta-D-fructose 1,6-bisphosphate</name>
        <dbReference type="ChEBI" id="CHEBI:32966"/>
        <note>allosteric activator</note>
    </ligand>
</feature>
<feature type="binding site" evidence="3">
    <location>
        <position position="464"/>
    </location>
    <ligand>
        <name>L-serine</name>
        <dbReference type="ChEBI" id="CHEBI:33384"/>
    </ligand>
</feature>
<feature type="binding site" evidence="3">
    <location>
        <position position="482"/>
    </location>
    <ligand>
        <name>beta-D-fructose 1,6-bisphosphate</name>
        <dbReference type="ChEBI" id="CHEBI:32966"/>
        <note>allosteric activator</note>
    </ligand>
</feature>
<feature type="binding site" evidence="3">
    <location>
        <position position="489"/>
    </location>
    <ligand>
        <name>beta-D-fructose 1,6-bisphosphate</name>
        <dbReference type="ChEBI" id="CHEBI:32966"/>
        <note>allosteric activator</note>
    </ligand>
</feature>
<feature type="binding site" evidence="3">
    <location>
        <begin position="516"/>
        <end position="521"/>
    </location>
    <ligand>
        <name>beta-D-fructose 1,6-bisphosphate</name>
        <dbReference type="ChEBI" id="CHEBI:32966"/>
        <note>allosteric activator</note>
    </ligand>
</feature>
<feature type="site" description="Transition state stabilizer" evidence="1">
    <location>
        <position position="270"/>
    </location>
</feature>
<feature type="site" description="Crucial for phosphotyrosine binding" evidence="3">
    <location>
        <position position="433"/>
    </location>
</feature>
<feature type="modified residue" description="N6,N6,N6-trimethyllysine" evidence="3">
    <location>
        <position position="3"/>
    </location>
</feature>
<feature type="modified residue" description="Phosphoserine" evidence="3">
    <location>
        <position position="37"/>
    </location>
</feature>
<feature type="modified residue" description="Phosphothreonine" evidence="3">
    <location>
        <position position="41"/>
    </location>
</feature>
<feature type="modified residue" description="N6-acetyllysine" evidence="14">
    <location>
        <position position="62"/>
    </location>
</feature>
<feature type="modified residue" description="N6-succinyllysine" evidence="14">
    <location>
        <position position="66"/>
    </location>
</feature>
<feature type="modified residue" description="N6-acetyllysine" evidence="3">
    <location>
        <position position="89"/>
    </location>
</feature>
<feature type="modified residue" description="Phosphoserine" evidence="2">
    <location>
        <position position="97"/>
    </location>
</feature>
<feature type="modified residue" description="Phosphoserine" evidence="2">
    <location>
        <position position="100"/>
    </location>
</feature>
<feature type="modified residue" description="Phosphotyrosine" evidence="13">
    <location>
        <position position="105"/>
    </location>
</feature>
<feature type="modified residue" description="Phosphoserine" evidence="3">
    <location>
        <position position="127"/>
    </location>
</feature>
<feature type="modified residue" description="Phosphotyrosine" evidence="13">
    <location>
        <position position="148"/>
    </location>
</feature>
<feature type="modified residue" description="N6-acetyllysine; alternate" evidence="14">
    <location>
        <position position="166"/>
    </location>
</feature>
<feature type="modified residue" description="N6-succinyllysine; alternate" evidence="14">
    <location>
        <position position="166"/>
    </location>
</feature>
<feature type="modified residue" description="Phosphotyrosine" evidence="3">
    <location>
        <position position="175"/>
    </location>
</feature>
<feature type="modified residue" description="Phosphothreonine" evidence="3">
    <location>
        <position position="195"/>
    </location>
</feature>
<feature type="modified residue" description="N6-acetyllysine; alternate" evidence="3">
    <location>
        <position position="266"/>
    </location>
</feature>
<feature type="modified residue" description="N6-acetyllysine; alternate" evidence="14">
    <location>
        <position position="270"/>
    </location>
</feature>
<feature type="modified residue" description="N6-acetyllysine" evidence="3">
    <location>
        <position position="305"/>
    </location>
</feature>
<feature type="modified residue" description="N6-acetyllysine; alternate" evidence="14">
    <location>
        <position position="322"/>
    </location>
</feature>
<feature type="modified residue" description="N6-succinyllysine; alternate" evidence="14">
    <location>
        <position position="322"/>
    </location>
</feature>
<feature type="modified residue" description="4-hydroxyproline" evidence="3">
    <location>
        <position position="403"/>
    </location>
</feature>
<feature type="modified residue" description="4-hydroxyproline" evidence="3">
    <location>
        <position position="408"/>
    </location>
</feature>
<feature type="modified residue" description="S-nitrosocysteine" evidence="9">
    <location>
        <position position="423"/>
    </location>
</feature>
<feature type="modified residue" description="S-nitrosocysteine" evidence="9">
    <location>
        <position position="424"/>
    </location>
</feature>
<feature type="modified residue" description="N6-acetyllysine" evidence="3">
    <location>
        <position position="433"/>
    </location>
</feature>
<feature type="modified residue" description="N6-acetyllysine" evidence="14">
    <location>
        <position position="475"/>
    </location>
</feature>
<feature type="modified residue" description="N6-succinyllysine" evidence="14">
    <location>
        <position position="498"/>
    </location>
</feature>
<feature type="cross-link" description="Glycyl lysine isopeptide (Lys-Gly) (interchain with G-Cter in SUMO2)" evidence="3">
    <location>
        <position position="115"/>
    </location>
</feature>
<feature type="cross-link" description="Glycyl lysine isopeptide (Lys-Gly) (interchain with G-Cter in SUMO1); alternate" evidence="3">
    <location>
        <position position="166"/>
    </location>
</feature>
<feature type="cross-link" description="Glycyl lysine isopeptide (Lys-Gly) (interchain with G-Cter in SUMO2); alternate" evidence="3">
    <location>
        <position position="266"/>
    </location>
</feature>
<feature type="cross-link" description="Glycyl lysine isopeptide (Lys-Gly) (interchain with G-Cter in SUMO2); alternate" evidence="3">
    <location>
        <position position="270"/>
    </location>
</feature>
<feature type="splice variant" id="VSP_025057" description="In isoform M1." evidence="10">
    <original>IYHLQLFEELRRLAPITSDPTEAAAVGAVEASFKCCSGAIIVLTK</original>
    <variation>MFHRLLFEELVRASSHSTDLMEAMAMGSVEASYKCLAAALIVLTE</variation>
    <location>
        <begin position="389"/>
        <end position="433"/>
    </location>
</feature>
<feature type="mutagenesis site" description="Abolishes pyruvate kinase activity without affecting interaction with the ribosome." evidence="7">
    <original>K</original>
    <variation>M</variation>
    <location>
        <position position="367"/>
    </location>
</feature>
<feature type="mutagenesis site" description="In knockin mice; abolished S-nitrosylation, leading to increased pyruvate kinase activity." evidence="9">
    <original>CC</original>
    <variation>AA</variation>
    <location>
        <begin position="423"/>
        <end position="424"/>
    </location>
</feature>
<feature type="mutagenesis site" description="Abolishes amino-acid binding without affecting interaction with the translating ribosome." evidence="7">
    <original>H</original>
    <variation>A</variation>
    <location>
        <position position="464"/>
    </location>
</feature>
<feature type="sequence conflict" description="In Ref. 2; CAA65761." evidence="12" ref="2">
    <original>A</original>
    <variation>V</variation>
    <location>
        <position position="8"/>
    </location>
</feature>
<feature type="sequence conflict" description="In Ref. 3; BAE30642/BAE32031." evidence="12" ref="3">
    <original>T</original>
    <variation>A</variation>
    <location>
        <position position="121"/>
    </location>
</feature>
<feature type="sequence conflict" description="In Ref. 1; BAA07457." evidence="12" ref="1">
    <original>W</original>
    <variation>R</variation>
    <location>
        <position position="158"/>
    </location>
</feature>
<feature type="sequence conflict" description="In Ref. 3; BAE42098." evidence="12" ref="3">
    <original>K</original>
    <variation>E</variation>
    <location>
        <position position="166"/>
    </location>
</feature>
<feature type="sequence conflict" description="In Ref. 3; BAE30642/BAE32031." evidence="12" ref="3">
    <original>V</original>
    <variation>L</variation>
    <location>
        <position position="170"/>
    </location>
</feature>
<feature type="sequence conflict" description="In Ref. 3; BAE42199." evidence="12" ref="3">
    <original>D</original>
    <variation>G</variation>
    <location>
        <position position="177"/>
    </location>
</feature>
<feature type="sequence conflict" description="In Ref. 3; BAE30642/BAE32031." evidence="12" ref="3">
    <original>K</original>
    <variation>R</variation>
    <location>
        <position position="230"/>
    </location>
</feature>
<feature type="sequence conflict" description="In Ref. 1; BAA07457." evidence="12" ref="1">
    <original>I</original>
    <variation>T</variation>
    <location>
        <position position="299"/>
    </location>
</feature>
<feature type="sequence conflict" description="In Ref. 1; BAA07457." evidence="12" ref="1">
    <original>A</original>
    <variation>S</variation>
    <location>
        <position position="309"/>
    </location>
</feature>
<feature type="sequence conflict" description="In Ref. 1; BAA07457 and 2; CAA65761." evidence="12" ref="1 2">
    <original>A</original>
    <variation>S</variation>
    <location>
        <position position="327"/>
    </location>
</feature>
<feature type="sequence conflict" description="In Ref. 1; BAA07457 and 2; CAA65761." evidence="12" ref="1 2">
    <original>S</original>
    <variation>I</variation>
    <location>
        <position position="333"/>
    </location>
</feature>
<feature type="sequence conflict" description="In Ref. 3; BAE33055/BAE42192." evidence="12" ref="3">
    <original>D</original>
    <variation>N</variation>
    <location>
        <position position="485"/>
    </location>
</feature>